<accession>Q7YWA8</accession>
<sequence length="77" mass="8678">MKNYSKNATHLITVLLFSFVVILLIIPSKCEAVSNDMQPLEARSADLIPEPRYIIDVPPRCPPGSKFIKNRCRVIVP</sequence>
<comment type="function">
    <text evidence="1">Nontoxic peptide.</text>
</comment>
<comment type="subcellular location">
    <subcellularLocation>
        <location evidence="1">Secreted</location>
    </subcellularLocation>
</comment>
<comment type="tissue specificity">
    <text>Expressed by the venom gland.</text>
</comment>
<comment type="similarity">
    <text evidence="3">Belongs to the secapin family.</text>
</comment>
<dbReference type="EMBL" id="AF488555">
    <property type="protein sequence ID" value="AAQ06324.1"/>
    <property type="molecule type" value="mRNA"/>
</dbReference>
<dbReference type="GO" id="GO:0005576">
    <property type="term" value="C:extracellular region"/>
    <property type="evidence" value="ECO:0007669"/>
    <property type="project" value="UniProtKB-SubCell"/>
</dbReference>
<dbReference type="InterPro" id="IPR020128">
    <property type="entry name" value="Secapin"/>
</dbReference>
<dbReference type="Pfam" id="PF17521">
    <property type="entry name" value="Secapin"/>
    <property type="match status" value="1"/>
</dbReference>
<protein>
    <recommendedName>
        <fullName>Secapin</fullName>
    </recommendedName>
</protein>
<keyword id="KW-1015">Disulfide bond</keyword>
<keyword id="KW-0964">Secreted</keyword>
<keyword id="KW-0732">Signal</keyword>
<reference key="1">
    <citation type="submission" date="2002-02" db="EMBL/GenBank/DDBJ databases">
        <title>Cloning and sequencing of genes encoding preprosecapin from the venom of wasps and yellowjackets.</title>
        <authorList>
            <person name="Zhang S.F."/>
            <person name="Shi W.J."/>
            <person name="Zhang C.X."/>
            <person name="Cheng J.A."/>
        </authorList>
    </citation>
    <scope>NUCLEOTIDE SEQUENCE [MRNA]</scope>
    <source>
        <tissue>Venom gland</tissue>
    </source>
</reference>
<feature type="signal peptide" evidence="2">
    <location>
        <begin position="1"/>
        <end position="32"/>
    </location>
</feature>
<feature type="propeptide" id="PRO_0000246022" evidence="1">
    <location>
        <begin position="33"/>
        <end position="52"/>
    </location>
</feature>
<feature type="peptide" id="PRO_0000246023" description="Secapin">
    <location>
        <begin position="53"/>
        <end position="77"/>
    </location>
</feature>
<feature type="disulfide bond" evidence="1">
    <location>
        <begin position="61"/>
        <end position="72"/>
    </location>
</feature>
<proteinExistence type="evidence at transcript level"/>
<name>SECP_VESVN</name>
<evidence type="ECO:0000250" key="1"/>
<evidence type="ECO:0000255" key="2"/>
<evidence type="ECO:0000305" key="3"/>
<organism>
    <name type="scientific">Vespa velutina nigrithorax</name>
    <name type="common">Hornet</name>
    <dbReference type="NCBI Taxonomy" id="202809"/>
    <lineage>
        <taxon>Eukaryota</taxon>
        <taxon>Metazoa</taxon>
        <taxon>Ecdysozoa</taxon>
        <taxon>Arthropoda</taxon>
        <taxon>Hexapoda</taxon>
        <taxon>Insecta</taxon>
        <taxon>Pterygota</taxon>
        <taxon>Neoptera</taxon>
        <taxon>Endopterygota</taxon>
        <taxon>Hymenoptera</taxon>
        <taxon>Apocrita</taxon>
        <taxon>Aculeata</taxon>
        <taxon>Vespoidea</taxon>
        <taxon>Vespidae</taxon>
        <taxon>Vespinae</taxon>
        <taxon>Vespa</taxon>
    </lineage>
</organism>